<organism>
    <name type="scientific">Methylobacterium nodulans (strain LMG 21967 / CNCM I-2342 / ORS 2060)</name>
    <dbReference type="NCBI Taxonomy" id="460265"/>
    <lineage>
        <taxon>Bacteria</taxon>
        <taxon>Pseudomonadati</taxon>
        <taxon>Pseudomonadota</taxon>
        <taxon>Alphaproteobacteria</taxon>
        <taxon>Hyphomicrobiales</taxon>
        <taxon>Methylobacteriaceae</taxon>
        <taxon>Methylobacterium</taxon>
    </lineage>
</organism>
<reference key="1">
    <citation type="submission" date="2009-01" db="EMBL/GenBank/DDBJ databases">
        <title>Complete sequence of chromosome of Methylobacterium nodulans ORS 2060.</title>
        <authorList>
            <consortium name="US DOE Joint Genome Institute"/>
            <person name="Lucas S."/>
            <person name="Copeland A."/>
            <person name="Lapidus A."/>
            <person name="Glavina del Rio T."/>
            <person name="Dalin E."/>
            <person name="Tice H."/>
            <person name="Bruce D."/>
            <person name="Goodwin L."/>
            <person name="Pitluck S."/>
            <person name="Sims D."/>
            <person name="Brettin T."/>
            <person name="Detter J.C."/>
            <person name="Han C."/>
            <person name="Larimer F."/>
            <person name="Land M."/>
            <person name="Hauser L."/>
            <person name="Kyrpides N."/>
            <person name="Ivanova N."/>
            <person name="Marx C.J."/>
            <person name="Richardson P."/>
        </authorList>
    </citation>
    <scope>NUCLEOTIDE SEQUENCE [LARGE SCALE GENOMIC DNA]</scope>
    <source>
        <strain>LMG 21967 / CNCM I-2342 / ORS 2060</strain>
    </source>
</reference>
<sequence length="134" mass="15662">MALYEHVFLARQDVTSQQVESMIDTYKGVIEANGGKVEKTEMWGVKSLAYRIKKNRKAHFTLLNIDAPPAALAEMERQMRISEDILRFLTIRVEALETEPSAMMQKRDRDERKDRERGRRRDEDGFSGDRNEEN</sequence>
<gene>
    <name evidence="1" type="primary">rpsF</name>
    <name type="ordered locus">Mnod_4637</name>
</gene>
<name>RS6_METNO</name>
<accession>B8IED2</accession>
<keyword id="KW-1185">Reference proteome</keyword>
<keyword id="KW-0687">Ribonucleoprotein</keyword>
<keyword id="KW-0689">Ribosomal protein</keyword>
<keyword id="KW-0694">RNA-binding</keyword>
<keyword id="KW-0699">rRNA-binding</keyword>
<feature type="chain" id="PRO_1000133535" description="Small ribosomal subunit protein bS6">
    <location>
        <begin position="1"/>
        <end position="134"/>
    </location>
</feature>
<feature type="region of interest" description="Disordered" evidence="2">
    <location>
        <begin position="99"/>
        <end position="134"/>
    </location>
</feature>
<feature type="compositionally biased region" description="Basic and acidic residues" evidence="2">
    <location>
        <begin position="105"/>
        <end position="134"/>
    </location>
</feature>
<comment type="function">
    <text evidence="1">Binds together with bS18 to 16S ribosomal RNA.</text>
</comment>
<comment type="similarity">
    <text evidence="1">Belongs to the bacterial ribosomal protein bS6 family.</text>
</comment>
<protein>
    <recommendedName>
        <fullName evidence="1">Small ribosomal subunit protein bS6</fullName>
    </recommendedName>
    <alternativeName>
        <fullName evidence="3">30S ribosomal protein S6</fullName>
    </alternativeName>
</protein>
<dbReference type="EMBL" id="CP001349">
    <property type="protein sequence ID" value="ACL59504.1"/>
    <property type="molecule type" value="Genomic_DNA"/>
</dbReference>
<dbReference type="RefSeq" id="WP_015931140.1">
    <property type="nucleotide sequence ID" value="NC_011894.1"/>
</dbReference>
<dbReference type="SMR" id="B8IED2"/>
<dbReference type="STRING" id="460265.Mnod_4637"/>
<dbReference type="KEGG" id="mno:Mnod_4637"/>
<dbReference type="eggNOG" id="COG0360">
    <property type="taxonomic scope" value="Bacteria"/>
</dbReference>
<dbReference type="HOGENOM" id="CLU_113441_2_0_5"/>
<dbReference type="OrthoDB" id="9812702at2"/>
<dbReference type="Proteomes" id="UP000008207">
    <property type="component" value="Chromosome"/>
</dbReference>
<dbReference type="GO" id="GO:0022627">
    <property type="term" value="C:cytosolic small ribosomal subunit"/>
    <property type="evidence" value="ECO:0007669"/>
    <property type="project" value="TreeGrafter"/>
</dbReference>
<dbReference type="GO" id="GO:0070181">
    <property type="term" value="F:small ribosomal subunit rRNA binding"/>
    <property type="evidence" value="ECO:0007669"/>
    <property type="project" value="TreeGrafter"/>
</dbReference>
<dbReference type="GO" id="GO:0003735">
    <property type="term" value="F:structural constituent of ribosome"/>
    <property type="evidence" value="ECO:0007669"/>
    <property type="project" value="InterPro"/>
</dbReference>
<dbReference type="GO" id="GO:0006412">
    <property type="term" value="P:translation"/>
    <property type="evidence" value="ECO:0007669"/>
    <property type="project" value="UniProtKB-UniRule"/>
</dbReference>
<dbReference type="CDD" id="cd00473">
    <property type="entry name" value="bS6"/>
    <property type="match status" value="1"/>
</dbReference>
<dbReference type="Gene3D" id="3.30.70.60">
    <property type="match status" value="1"/>
</dbReference>
<dbReference type="HAMAP" id="MF_00360">
    <property type="entry name" value="Ribosomal_bS6"/>
    <property type="match status" value="1"/>
</dbReference>
<dbReference type="InterPro" id="IPR000529">
    <property type="entry name" value="Ribosomal_bS6"/>
</dbReference>
<dbReference type="InterPro" id="IPR035980">
    <property type="entry name" value="Ribosomal_bS6_sf"/>
</dbReference>
<dbReference type="InterPro" id="IPR020814">
    <property type="entry name" value="Ribosomal_S6_plastid/chlpt"/>
</dbReference>
<dbReference type="InterPro" id="IPR014717">
    <property type="entry name" value="Transl_elong_EF1B/ribsomal_bS6"/>
</dbReference>
<dbReference type="NCBIfam" id="TIGR00166">
    <property type="entry name" value="S6"/>
    <property type="match status" value="1"/>
</dbReference>
<dbReference type="PANTHER" id="PTHR21011">
    <property type="entry name" value="MITOCHONDRIAL 28S RIBOSOMAL PROTEIN S6"/>
    <property type="match status" value="1"/>
</dbReference>
<dbReference type="PANTHER" id="PTHR21011:SF1">
    <property type="entry name" value="SMALL RIBOSOMAL SUBUNIT PROTEIN BS6M"/>
    <property type="match status" value="1"/>
</dbReference>
<dbReference type="Pfam" id="PF01250">
    <property type="entry name" value="Ribosomal_S6"/>
    <property type="match status" value="1"/>
</dbReference>
<dbReference type="SUPFAM" id="SSF54995">
    <property type="entry name" value="Ribosomal protein S6"/>
    <property type="match status" value="1"/>
</dbReference>
<evidence type="ECO:0000255" key="1">
    <source>
        <dbReference type="HAMAP-Rule" id="MF_00360"/>
    </source>
</evidence>
<evidence type="ECO:0000256" key="2">
    <source>
        <dbReference type="SAM" id="MobiDB-lite"/>
    </source>
</evidence>
<evidence type="ECO:0000305" key="3"/>
<proteinExistence type="inferred from homology"/>